<proteinExistence type="evidence at protein level"/>
<keyword id="KW-0002">3D-structure</keyword>
<keyword id="KW-0007">Acetylation</keyword>
<keyword id="KW-0175">Coiled coil</keyword>
<keyword id="KW-0225">Disease variant</keyword>
<keyword id="KW-0509">mRNA transport</keyword>
<keyword id="KW-0906">Nuclear pore complex</keyword>
<keyword id="KW-0539">Nucleus</keyword>
<keyword id="KW-0597">Phosphoprotein</keyword>
<keyword id="KW-0653">Protein transport</keyword>
<keyword id="KW-1267">Proteomics identification</keyword>
<keyword id="KW-1185">Reference proteome</keyword>
<keyword id="KW-0811">Translocation</keyword>
<keyword id="KW-0813">Transport</keyword>
<feature type="initiator methionine" description="Removed" evidence="13">
    <location>
        <position position="1"/>
    </location>
</feature>
<feature type="chain" id="PRO_0000204887" description="Nuclear pore complex protein Nup88">
    <location>
        <begin position="2"/>
        <end position="741"/>
    </location>
</feature>
<feature type="coiled-coil region" evidence="2">
    <location>
        <begin position="585"/>
        <end position="651"/>
    </location>
</feature>
<feature type="modified residue" description="N-acetylalanine" evidence="13">
    <location>
        <position position="2"/>
    </location>
</feature>
<feature type="modified residue" description="Phosphoserine" evidence="8 14">
    <location>
        <position position="35"/>
    </location>
</feature>
<feature type="modified residue" description="Phosphoserine" evidence="8 14">
    <location>
        <position position="50"/>
    </location>
</feature>
<feature type="modified residue" description="Phosphoserine" evidence="14">
    <location>
        <position position="379"/>
    </location>
</feature>
<feature type="modified residue" description="Phosphoserine" evidence="14">
    <location>
        <position position="437"/>
    </location>
</feature>
<feature type="modified residue" description="Phosphoserine" evidence="14">
    <location>
        <position position="442"/>
    </location>
</feature>
<feature type="modified residue" description="Phosphoserine" evidence="6 7 8 9 10 11 12 14">
    <location>
        <position position="517"/>
    </location>
</feature>
<feature type="modified residue" description="Phosphothreonine" evidence="6 8 9 11 14">
    <location>
        <position position="525"/>
    </location>
</feature>
<feature type="modified residue" description="Phosphoserine" evidence="11">
    <location>
        <position position="540"/>
    </location>
</feature>
<feature type="modified residue" description="Phosphoserine" evidence="1">
    <location>
        <position position="698"/>
    </location>
</feature>
<feature type="sequence variant" id="VAR_029340" description="In dbSNP:rs1806245.">
    <original>N</original>
    <variation>S</variation>
    <location>
        <position position="289"/>
    </location>
</feature>
<feature type="sequence variant" id="VAR_082159" description="In FADS4; no effect on localization to the nuclear pore complex; no effect on interaction with NUP214 and NUP62; dbSNP:rs1567568217." evidence="3">
    <original>D</original>
    <variation>Y</variation>
    <location>
        <position position="434"/>
    </location>
</feature>
<feature type="sequence variant" id="VAR_082160" description="In FADS4; decreased localization to the nuclear pore complex; decreased interaction with NUP214 and NUP62." evidence="3">
    <location>
        <begin position="509"/>
        <end position="741"/>
    </location>
</feature>
<feature type="sequence variant" id="VAR_082161" description="In FADS4; decreased localization to the nuclear pore complex; decreased interaction with NUP214 and NUP62." evidence="3">
    <location>
        <position position="634"/>
    </location>
</feature>
<feature type="sequence conflict" description="In Ref. 1; CAA69904." evidence="5" ref="1">
    <original>A</original>
    <variation>D</variation>
    <location>
        <position position="247"/>
    </location>
</feature>
<feature type="sequence conflict" description="In Ref. 1; CAA69904." evidence="5" ref="1">
    <original>GKLLGPLPMHP</original>
    <variation>WKAVGSIAHAS</variation>
    <location>
        <begin position="291"/>
        <end position="301"/>
    </location>
</feature>
<feature type="sequence conflict" description="In Ref. 1; CAA69904." evidence="5" ref="1">
    <original>K</original>
    <variation>R</variation>
    <location>
        <position position="456"/>
    </location>
</feature>
<feature type="sequence conflict" description="In Ref. 1; CAA69904." evidence="5" ref="1">
    <original>P</original>
    <variation>S</variation>
    <location>
        <position position="518"/>
    </location>
</feature>
<feature type="helix" evidence="15">
    <location>
        <begin position="14"/>
        <end position="17"/>
    </location>
</feature>
<feature type="helix" evidence="15">
    <location>
        <begin position="18"/>
        <end position="20"/>
    </location>
</feature>
<feature type="helix" evidence="15">
    <location>
        <begin position="22"/>
        <end position="32"/>
    </location>
</feature>
<feature type="strand" evidence="15">
    <location>
        <begin position="61"/>
        <end position="64"/>
    </location>
</feature>
<feature type="strand" evidence="15">
    <location>
        <begin position="67"/>
        <end position="72"/>
    </location>
</feature>
<feature type="turn" evidence="15">
    <location>
        <begin position="73"/>
        <end position="76"/>
    </location>
</feature>
<feature type="strand" evidence="15">
    <location>
        <begin position="77"/>
        <end position="82"/>
    </location>
</feature>
<feature type="strand" evidence="15">
    <location>
        <begin position="99"/>
        <end position="105"/>
    </location>
</feature>
<feature type="strand" evidence="15">
    <location>
        <begin position="113"/>
        <end position="116"/>
    </location>
</feature>
<feature type="strand" evidence="15">
    <location>
        <begin position="120"/>
        <end position="126"/>
    </location>
</feature>
<feature type="strand" evidence="15">
    <location>
        <begin position="131"/>
        <end position="135"/>
    </location>
</feature>
<feature type="turn" evidence="15">
    <location>
        <begin position="141"/>
        <end position="144"/>
    </location>
</feature>
<feature type="helix" evidence="15">
    <location>
        <begin position="147"/>
        <end position="149"/>
    </location>
</feature>
<feature type="strand" evidence="15">
    <location>
        <begin position="151"/>
        <end position="155"/>
    </location>
</feature>
<feature type="strand" evidence="15">
    <location>
        <begin position="157"/>
        <end position="161"/>
    </location>
</feature>
<feature type="helix" evidence="15">
    <location>
        <begin position="162"/>
        <end position="167"/>
    </location>
</feature>
<feature type="strand" evidence="15">
    <location>
        <begin position="173"/>
        <end position="178"/>
    </location>
</feature>
<feature type="strand" evidence="15">
    <location>
        <begin position="182"/>
        <end position="184"/>
    </location>
</feature>
<feature type="strand" evidence="15">
    <location>
        <begin position="187"/>
        <end position="192"/>
    </location>
</feature>
<feature type="turn" evidence="15">
    <location>
        <begin position="193"/>
        <end position="195"/>
    </location>
</feature>
<feature type="strand" evidence="15">
    <location>
        <begin position="196"/>
        <end position="201"/>
    </location>
</feature>
<feature type="strand" evidence="15">
    <location>
        <begin position="209"/>
        <end position="213"/>
    </location>
</feature>
<feature type="strand" evidence="15">
    <location>
        <begin position="229"/>
        <end position="232"/>
    </location>
</feature>
<feature type="strand" evidence="15">
    <location>
        <begin position="237"/>
        <end position="243"/>
    </location>
</feature>
<feature type="strand" evidence="15">
    <location>
        <begin position="247"/>
        <end position="250"/>
    </location>
</feature>
<feature type="helix" evidence="15">
    <location>
        <begin position="251"/>
        <end position="254"/>
    </location>
</feature>
<feature type="strand" evidence="15">
    <location>
        <begin position="261"/>
        <end position="271"/>
    </location>
</feature>
<feature type="strand" evidence="15">
    <location>
        <begin position="276"/>
        <end position="281"/>
    </location>
</feature>
<feature type="turn" evidence="15">
    <location>
        <begin position="283"/>
        <end position="285"/>
    </location>
</feature>
<feature type="strand" evidence="15">
    <location>
        <begin position="288"/>
        <end position="290"/>
    </location>
</feature>
<feature type="strand" evidence="15">
    <location>
        <begin position="299"/>
        <end position="301"/>
    </location>
</feature>
<feature type="turn" evidence="15">
    <location>
        <begin position="304"/>
        <end position="307"/>
    </location>
</feature>
<feature type="strand" evidence="15">
    <location>
        <begin position="311"/>
        <end position="321"/>
    </location>
</feature>
<feature type="strand" evidence="15">
    <location>
        <begin position="323"/>
        <end position="328"/>
    </location>
</feature>
<feature type="strand" evidence="15">
    <location>
        <begin position="331"/>
        <end position="340"/>
    </location>
</feature>
<feature type="strand" evidence="15">
    <location>
        <begin position="362"/>
        <end position="370"/>
    </location>
</feature>
<feature type="turn" evidence="15">
    <location>
        <begin position="371"/>
        <end position="373"/>
    </location>
</feature>
<feature type="strand" evidence="15">
    <location>
        <begin position="394"/>
        <end position="397"/>
    </location>
</feature>
<feature type="strand" evidence="15">
    <location>
        <begin position="404"/>
        <end position="409"/>
    </location>
</feature>
<feature type="strand" evidence="15">
    <location>
        <begin position="412"/>
        <end position="417"/>
    </location>
</feature>
<feature type="helix" evidence="15">
    <location>
        <begin position="421"/>
        <end position="423"/>
    </location>
</feature>
<feature type="strand" evidence="15">
    <location>
        <begin position="429"/>
        <end position="431"/>
    </location>
</feature>
<feature type="helix" evidence="15">
    <location>
        <begin position="432"/>
        <end position="442"/>
    </location>
</feature>
<feature type="strand" evidence="15">
    <location>
        <begin position="448"/>
        <end position="454"/>
    </location>
</feature>
<feature type="strand" evidence="15">
    <location>
        <begin position="467"/>
        <end position="472"/>
    </location>
</feature>
<feature type="strand" evidence="15">
    <location>
        <begin position="479"/>
        <end position="483"/>
    </location>
</feature>
<feature type="strand" evidence="15">
    <location>
        <begin position="489"/>
        <end position="492"/>
    </location>
</feature>
<gene>
    <name type="primary">NUP88</name>
</gene>
<dbReference type="EMBL" id="Y08612">
    <property type="protein sequence ID" value="CAA69904.1"/>
    <property type="molecule type" value="mRNA"/>
</dbReference>
<dbReference type="EMBL" id="CH471108">
    <property type="protein sequence ID" value="EAW90340.1"/>
    <property type="molecule type" value="Genomic_DNA"/>
</dbReference>
<dbReference type="EMBL" id="CH471108">
    <property type="protein sequence ID" value="EAW90342.1"/>
    <property type="molecule type" value="Genomic_DNA"/>
</dbReference>
<dbReference type="EMBL" id="BC000335">
    <property type="protein sequence ID" value="AAH00335.1"/>
    <property type="molecule type" value="mRNA"/>
</dbReference>
<dbReference type="CCDS" id="CCDS11070.1"/>
<dbReference type="RefSeq" id="NP_001307582.1">
    <property type="nucleotide sequence ID" value="NM_001320653.1"/>
</dbReference>
<dbReference type="RefSeq" id="NP_002523.2">
    <property type="nucleotide sequence ID" value="NM_002532.5"/>
</dbReference>
<dbReference type="PDB" id="7MNI">
    <property type="method" value="X-ray"/>
    <property type="resolution" value="2.00 A"/>
    <property type="chains" value="A/C=1-493"/>
</dbReference>
<dbReference type="PDB" id="7R5J">
    <property type="method" value="EM"/>
    <property type="resolution" value="50.00 A"/>
    <property type="chains" value="W0=1-741"/>
</dbReference>
<dbReference type="PDB" id="7R5K">
    <property type="method" value="EM"/>
    <property type="resolution" value="12.00 A"/>
    <property type="chains" value="W0=1-741"/>
</dbReference>
<dbReference type="PDBsum" id="7MNI"/>
<dbReference type="PDBsum" id="7R5J"/>
<dbReference type="PDBsum" id="7R5K"/>
<dbReference type="EMDB" id="EMD-14321"/>
<dbReference type="EMDB" id="EMD-14322"/>
<dbReference type="SMR" id="Q99567"/>
<dbReference type="BioGRID" id="110981">
    <property type="interactions" value="152"/>
</dbReference>
<dbReference type="ComplexPortal" id="CPX-873">
    <property type="entry name" value="Nuclear pore complex"/>
</dbReference>
<dbReference type="CORUM" id="Q99567"/>
<dbReference type="FunCoup" id="Q99567">
    <property type="interactions" value="4242"/>
</dbReference>
<dbReference type="IntAct" id="Q99567">
    <property type="interactions" value="77"/>
</dbReference>
<dbReference type="MINT" id="Q99567"/>
<dbReference type="STRING" id="9606.ENSP00000458954"/>
<dbReference type="TCDB" id="1.I.1.1.3">
    <property type="family name" value="the nuclear pore complex (npc) family"/>
</dbReference>
<dbReference type="GlyGen" id="Q99567">
    <property type="glycosylation" value="1 site, 1 O-linked glycan (1 site)"/>
</dbReference>
<dbReference type="iPTMnet" id="Q99567"/>
<dbReference type="PhosphoSitePlus" id="Q99567"/>
<dbReference type="SwissPalm" id="Q99567"/>
<dbReference type="BioMuta" id="NUP88"/>
<dbReference type="DMDM" id="25008854"/>
<dbReference type="jPOST" id="Q99567"/>
<dbReference type="MassIVE" id="Q99567"/>
<dbReference type="PaxDb" id="9606-ENSP00000458954"/>
<dbReference type="PeptideAtlas" id="Q99567"/>
<dbReference type="ProteomicsDB" id="78327"/>
<dbReference type="Pumba" id="Q99567"/>
<dbReference type="Antibodypedia" id="3693">
    <property type="antibodies" value="195 antibodies from 29 providers"/>
</dbReference>
<dbReference type="DNASU" id="4927"/>
<dbReference type="Ensembl" id="ENST00000573584.6">
    <property type="protein sequence ID" value="ENSP00000458954.1"/>
    <property type="gene ID" value="ENSG00000108559.13"/>
</dbReference>
<dbReference type="GeneID" id="4927"/>
<dbReference type="KEGG" id="hsa:4927"/>
<dbReference type="MANE-Select" id="ENST00000573584.6">
    <property type="protein sequence ID" value="ENSP00000458954.1"/>
    <property type="RefSeq nucleotide sequence ID" value="NM_002532.6"/>
    <property type="RefSeq protein sequence ID" value="NP_002523.2"/>
</dbReference>
<dbReference type="UCSC" id="uc002gbo.3">
    <property type="organism name" value="human"/>
</dbReference>
<dbReference type="AGR" id="HGNC:8067"/>
<dbReference type="CTD" id="4927"/>
<dbReference type="DisGeNET" id="4927"/>
<dbReference type="GeneCards" id="NUP88"/>
<dbReference type="HGNC" id="HGNC:8067">
    <property type="gene designation" value="NUP88"/>
</dbReference>
<dbReference type="HPA" id="ENSG00000108559">
    <property type="expression patterns" value="Low tissue specificity"/>
</dbReference>
<dbReference type="MalaCards" id="NUP88"/>
<dbReference type="MIM" id="602552">
    <property type="type" value="gene"/>
</dbReference>
<dbReference type="MIM" id="618393">
    <property type="type" value="phenotype"/>
</dbReference>
<dbReference type="neXtProt" id="NX_Q99567"/>
<dbReference type="OpenTargets" id="ENSG00000108559"/>
<dbReference type="Orphanet" id="994">
    <property type="disease" value="Fetal akinesia deformation sequence"/>
</dbReference>
<dbReference type="PharmGKB" id="PA31855"/>
<dbReference type="VEuPathDB" id="HostDB:ENSG00000108559"/>
<dbReference type="eggNOG" id="KOG4460">
    <property type="taxonomic scope" value="Eukaryota"/>
</dbReference>
<dbReference type="GeneTree" id="ENSGT00390000015063"/>
<dbReference type="InParanoid" id="Q99567"/>
<dbReference type="OMA" id="AYSCPIH"/>
<dbReference type="OrthoDB" id="341482at2759"/>
<dbReference type="PAN-GO" id="Q99567">
    <property type="GO annotations" value="5 GO annotations based on evolutionary models"/>
</dbReference>
<dbReference type="PhylomeDB" id="Q99567"/>
<dbReference type="TreeFam" id="TF105307"/>
<dbReference type="PathwayCommons" id="Q99567"/>
<dbReference type="Reactome" id="R-HSA-1169408">
    <property type="pathway name" value="ISG15 antiviral mechanism"/>
</dbReference>
<dbReference type="Reactome" id="R-HSA-159227">
    <property type="pathway name" value="Transport of the SLBP independent Mature mRNA"/>
</dbReference>
<dbReference type="Reactome" id="R-HSA-159230">
    <property type="pathway name" value="Transport of the SLBP Dependant Mature mRNA"/>
</dbReference>
<dbReference type="Reactome" id="R-HSA-159231">
    <property type="pathway name" value="Transport of Mature mRNA Derived from an Intronless Transcript"/>
</dbReference>
<dbReference type="Reactome" id="R-HSA-159236">
    <property type="pathway name" value="Transport of Mature mRNA derived from an Intron-Containing Transcript"/>
</dbReference>
<dbReference type="Reactome" id="R-HSA-165054">
    <property type="pathway name" value="Rev-mediated nuclear export of HIV RNA"/>
</dbReference>
<dbReference type="Reactome" id="R-HSA-168271">
    <property type="pathway name" value="Transport of Ribonucleoproteins into the Host Nucleus"/>
</dbReference>
<dbReference type="Reactome" id="R-HSA-168276">
    <property type="pathway name" value="NS1 Mediated Effects on Host Pathways"/>
</dbReference>
<dbReference type="Reactome" id="R-HSA-168325">
    <property type="pathway name" value="Viral Messenger RNA Synthesis"/>
</dbReference>
<dbReference type="Reactome" id="R-HSA-168333">
    <property type="pathway name" value="NEP/NS2 Interacts with the Cellular Export Machinery"/>
</dbReference>
<dbReference type="Reactome" id="R-HSA-170822">
    <property type="pathway name" value="Regulation of Glucokinase by Glucokinase Regulatory Protein"/>
</dbReference>
<dbReference type="Reactome" id="R-HSA-180746">
    <property type="pathway name" value="Nuclear import of Rev protein"/>
</dbReference>
<dbReference type="Reactome" id="R-HSA-180910">
    <property type="pathway name" value="Vpr-mediated nuclear import of PICs"/>
</dbReference>
<dbReference type="Reactome" id="R-HSA-191859">
    <property type="pathway name" value="snRNP Assembly"/>
</dbReference>
<dbReference type="Reactome" id="R-HSA-3108214">
    <property type="pathway name" value="SUMOylation of DNA damage response and repair proteins"/>
</dbReference>
<dbReference type="Reactome" id="R-HSA-3232142">
    <property type="pathway name" value="SUMOylation of ubiquitinylation proteins"/>
</dbReference>
<dbReference type="Reactome" id="R-HSA-3301854">
    <property type="pathway name" value="Nuclear Pore Complex (NPC) Disassembly"/>
</dbReference>
<dbReference type="Reactome" id="R-HSA-3371453">
    <property type="pathway name" value="Regulation of HSF1-mediated heat shock response"/>
</dbReference>
<dbReference type="Reactome" id="R-HSA-4085377">
    <property type="pathway name" value="SUMOylation of SUMOylation proteins"/>
</dbReference>
<dbReference type="Reactome" id="R-HSA-4551638">
    <property type="pathway name" value="SUMOylation of chromatin organization proteins"/>
</dbReference>
<dbReference type="Reactome" id="R-HSA-4570464">
    <property type="pathway name" value="SUMOylation of RNA binding proteins"/>
</dbReference>
<dbReference type="Reactome" id="R-HSA-4615885">
    <property type="pathway name" value="SUMOylation of DNA replication proteins"/>
</dbReference>
<dbReference type="Reactome" id="R-HSA-5578749">
    <property type="pathway name" value="Transcriptional regulation by small RNAs"/>
</dbReference>
<dbReference type="Reactome" id="R-HSA-5619107">
    <property type="pathway name" value="Defective TPR may confer susceptibility towards thyroid papillary carcinoma (TPC)"/>
</dbReference>
<dbReference type="Reactome" id="R-HSA-6784531">
    <property type="pathway name" value="tRNA processing in the nucleus"/>
</dbReference>
<dbReference type="Reactome" id="R-HSA-9609690">
    <property type="pathway name" value="HCMV Early Events"/>
</dbReference>
<dbReference type="Reactome" id="R-HSA-9610379">
    <property type="pathway name" value="HCMV Late Events"/>
</dbReference>
<dbReference type="Reactome" id="R-HSA-9705671">
    <property type="pathway name" value="SARS-CoV-2 activates/modulates innate and adaptive immune responses"/>
</dbReference>
<dbReference type="SignaLink" id="Q99567"/>
<dbReference type="SIGNOR" id="Q99567"/>
<dbReference type="BioGRID-ORCS" id="4927">
    <property type="hits" value="735 hits in 1170 CRISPR screens"/>
</dbReference>
<dbReference type="CD-CODE" id="DEE660B4">
    <property type="entry name" value="Stress granule"/>
</dbReference>
<dbReference type="ChiTaRS" id="NUP88">
    <property type="organism name" value="human"/>
</dbReference>
<dbReference type="GeneWiki" id="NUP88"/>
<dbReference type="GenomeRNAi" id="4927"/>
<dbReference type="Pharos" id="Q99567">
    <property type="development level" value="Tbio"/>
</dbReference>
<dbReference type="PRO" id="PR:Q99567"/>
<dbReference type="Proteomes" id="UP000005640">
    <property type="component" value="Chromosome 17"/>
</dbReference>
<dbReference type="RNAct" id="Q99567">
    <property type="molecule type" value="protein"/>
</dbReference>
<dbReference type="Bgee" id="ENSG00000108559">
    <property type="expression patterns" value="Expressed in right testis and 200 other cell types or tissues"/>
</dbReference>
<dbReference type="ExpressionAtlas" id="Q99567">
    <property type="expression patterns" value="baseline and differential"/>
</dbReference>
<dbReference type="GO" id="GO:0005829">
    <property type="term" value="C:cytosol"/>
    <property type="evidence" value="ECO:0000304"/>
    <property type="project" value="Reactome"/>
</dbReference>
<dbReference type="GO" id="GO:0005635">
    <property type="term" value="C:nuclear envelope"/>
    <property type="evidence" value="ECO:0000314"/>
    <property type="project" value="ComplexPortal"/>
</dbReference>
<dbReference type="GO" id="GO:0005643">
    <property type="term" value="C:nuclear pore"/>
    <property type="evidence" value="ECO:0000314"/>
    <property type="project" value="UniProtKB"/>
</dbReference>
<dbReference type="GO" id="GO:0005654">
    <property type="term" value="C:nucleoplasm"/>
    <property type="evidence" value="ECO:0000314"/>
    <property type="project" value="HPA"/>
</dbReference>
<dbReference type="GO" id="GO:0017056">
    <property type="term" value="F:structural constituent of nuclear pore"/>
    <property type="evidence" value="ECO:0000304"/>
    <property type="project" value="ProtInc"/>
</dbReference>
<dbReference type="GO" id="GO:0006406">
    <property type="term" value="P:mRNA export from nucleus"/>
    <property type="evidence" value="ECO:0000318"/>
    <property type="project" value="GO_Central"/>
</dbReference>
<dbReference type="GO" id="GO:0006913">
    <property type="term" value="P:nucleocytoplasmic transport"/>
    <property type="evidence" value="ECO:0000303"/>
    <property type="project" value="ComplexPortal"/>
</dbReference>
<dbReference type="GO" id="GO:0006606">
    <property type="term" value="P:protein import into nucleus"/>
    <property type="evidence" value="ECO:0000318"/>
    <property type="project" value="GO_Central"/>
</dbReference>
<dbReference type="GO" id="GO:0000055">
    <property type="term" value="P:ribosomal large subunit export from nucleus"/>
    <property type="evidence" value="ECO:0000318"/>
    <property type="project" value="GO_Central"/>
</dbReference>
<dbReference type="GO" id="GO:0000056">
    <property type="term" value="P:ribosomal small subunit export from nucleus"/>
    <property type="evidence" value="ECO:0000318"/>
    <property type="project" value="GO_Central"/>
</dbReference>
<dbReference type="InterPro" id="IPR019321">
    <property type="entry name" value="Nucleoporin_Nup88"/>
</dbReference>
<dbReference type="InterPro" id="IPR037700">
    <property type="entry name" value="NUP88/NUP82"/>
</dbReference>
<dbReference type="PANTHER" id="PTHR13257:SF0">
    <property type="entry name" value="NUCLEAR PORE COMPLEX PROTEIN NUP88"/>
    <property type="match status" value="1"/>
</dbReference>
<dbReference type="PANTHER" id="PTHR13257">
    <property type="entry name" value="NUCLEOPORIN NUP84-RELATED"/>
    <property type="match status" value="1"/>
</dbReference>
<dbReference type="Pfam" id="PF10168">
    <property type="entry name" value="Nup88"/>
    <property type="match status" value="1"/>
</dbReference>
<protein>
    <recommendedName>
        <fullName>Nuclear pore complex protein Nup88</fullName>
    </recommendedName>
    <alternativeName>
        <fullName>88 kDa nucleoporin</fullName>
    </alternativeName>
    <alternativeName>
        <fullName>Nucleoporin Nup88</fullName>
    </alternativeName>
</protein>
<evidence type="ECO:0000250" key="1">
    <source>
        <dbReference type="UniProtKB" id="Q8CEC0"/>
    </source>
</evidence>
<evidence type="ECO:0000255" key="2"/>
<evidence type="ECO:0000269" key="3">
    <source>
    </source>
</evidence>
<evidence type="ECO:0000269" key="4">
    <source>
    </source>
</evidence>
<evidence type="ECO:0000305" key="5"/>
<evidence type="ECO:0007744" key="6">
    <source>
    </source>
</evidence>
<evidence type="ECO:0007744" key="7">
    <source>
    </source>
</evidence>
<evidence type="ECO:0007744" key="8">
    <source>
    </source>
</evidence>
<evidence type="ECO:0007744" key="9">
    <source>
    </source>
</evidence>
<evidence type="ECO:0007744" key="10">
    <source>
    </source>
</evidence>
<evidence type="ECO:0007744" key="11">
    <source>
    </source>
</evidence>
<evidence type="ECO:0007744" key="12">
    <source>
    </source>
</evidence>
<evidence type="ECO:0007744" key="13">
    <source>
    </source>
</evidence>
<evidence type="ECO:0007744" key="14">
    <source>
    </source>
</evidence>
<evidence type="ECO:0007829" key="15">
    <source>
        <dbReference type="PDB" id="7MNI"/>
    </source>
</evidence>
<accession>Q99567</accession>
<accession>D3DTM2</accession>
<accession>Q9BWE5</accession>
<comment type="function">
    <text evidence="3">Component of nuclear pore complex.</text>
</comment>
<comment type="subunit">
    <text evidence="3 4">Interacts with NUP214/CAN (PubMed:30543681, PubMed:9049309). Interacts with NUP62 and NUP98 (PubMed:30543681).</text>
</comment>
<comment type="interaction">
    <interactant intactId="EBI-726178">
        <id>Q99567</id>
    </interactant>
    <interactant intactId="EBI-1222270">
        <id>P35658</id>
        <label>NUP214</label>
    </interactant>
    <organismsDiffer>false</organismsDiffer>
    <experiments>4</experiments>
</comment>
<comment type="interaction">
    <interactant intactId="EBI-726178">
        <id>Q99567</id>
    </interactant>
    <interactant intactId="EBI-347978">
        <id>P37198</id>
        <label>NUP62</label>
    </interactant>
    <organismsDiffer>false</organismsDiffer>
    <experiments>8</experiments>
</comment>
<comment type="interaction">
    <interactant intactId="EBI-726178">
        <id>Q99567</id>
    </interactant>
    <interactant intactId="EBI-1105213">
        <id>Q9UBB9</id>
        <label>TFIP11</label>
    </interactant>
    <organismsDiffer>false</organismsDiffer>
    <experiments>3</experiments>
</comment>
<comment type="subcellular location">
    <subcellularLocation>
        <location evidence="3">Nucleus</location>
        <location evidence="3">Nuclear pore complex</location>
    </subcellularLocation>
</comment>
<comment type="tissue specificity">
    <text>Ubiquitous.</text>
</comment>
<comment type="disease" evidence="3">
    <disease id="DI-05537">
        <name>Fetal akinesia deformation sequence 4</name>
        <acronym>FADS4</acronym>
        <description>A clinically and genetically heterogeneous group of disorders with congenital malformations related to impaired fetal movement. Clinical features include fetal akinesia, intrauterine growth retardation, polyhydramnios, arthrogryposis, pulmonary hypoplasia, craniofacial abnormalities, and cryptorchidism. FADS4 inheritance is autosomal recessive.</description>
        <dbReference type="MIM" id="618393"/>
    </disease>
    <text evidence="3">The disease is caused by variants affecting the gene represented in this entry. Disease mechanism likely includes impaired formation of the neuromuscular junction. NUP88 silencing in vitro results in reduced levels of rapsyn, a key player in clustering of nicotinic acetylcholine receptors (nAChRs) at the neuromuscular junction. Decreased rapsyn levels have also been observed in a patient muscle biopsy.</text>
</comment>
<organism>
    <name type="scientific">Homo sapiens</name>
    <name type="common">Human</name>
    <dbReference type="NCBI Taxonomy" id="9606"/>
    <lineage>
        <taxon>Eukaryota</taxon>
        <taxon>Metazoa</taxon>
        <taxon>Chordata</taxon>
        <taxon>Craniata</taxon>
        <taxon>Vertebrata</taxon>
        <taxon>Euteleostomi</taxon>
        <taxon>Mammalia</taxon>
        <taxon>Eutheria</taxon>
        <taxon>Euarchontoglires</taxon>
        <taxon>Primates</taxon>
        <taxon>Haplorrhini</taxon>
        <taxon>Catarrhini</taxon>
        <taxon>Hominidae</taxon>
        <taxon>Homo</taxon>
    </lineage>
</organism>
<sequence>MAAAEGPVGDGELWQTWLPNHVVFLRLREGLKNQSPTEAEKPASSSLPSSPPPQLLTRNVVFGLGGELFLWDGEDSSFLVVRLRGPSGGGEEPALSQYQRLLCINPPLFEIYQVLLSPTQHHVALIGIKGLMVLELPKRWGKNSEFEGGKSTVNCSTTPVAERFFTSSTSLTLKHAAWYPSEILDPHVVLLTSDNVIRIYSLREPQTPTNVIILSEAEEESLVLNKGRAYTASLGETAVAFDFGPLAAVPKTLFGQNGKDEVVAYPLYILYENGETFLTYISLLHSPGNIGKLLGPLPMHPAAEDNYGYDACAVLCLPCVPNILVIATESGMLYHCVVLEGEEEDDHTSEKSWDSRIDLIPSLYVFECVELELALKLASGEDDPFDSDFSCPVKLHRDPKCPSRYHCTHEAGVHSVGLTWIHKLHKFLGSDEEDKDSLQELSTEQKCFVEHILCTKPLPCRQPAPIRGFWIVPDILGPTMICITSTYECLIWPLLSTVHPASPPLLCTREDVEVAESPLRVLAETPDSFEKHIRSILQRSVANPAFLKASEKDIAPPPEECLQLLSRATQVFREQYILKQDLAKEEIQRRVKLLCDQKKKQLEDLSYCREERKSLREMAERLADKYEEAKEKQEDIMNRMKKLLHSFHSELPVLSDSERDMKKELQLIPDQLRHLGNAIKQVTMKKDYQQQKMEKVLSLPKPTIILSAYQRKCIQSILKEEGEHIREMVKQINDIRNHVNF</sequence>
<name>NUP88_HUMAN</name>
<reference key="1">
    <citation type="journal article" date="1997" name="EMBO J.">
        <title>The human homologue of yeast CRM1 is in a dynamic subcomplex with CAN/Nup214 and the novel nuclear pore component Nup88.</title>
        <authorList>
            <person name="Fornerod M."/>
            <person name="van Deursen J.M."/>
            <person name="van Baal S."/>
            <person name="Reynolds A."/>
            <person name="Davis D."/>
            <person name="Murti K.G."/>
            <person name="Fransen J."/>
            <person name="Grosveld G."/>
        </authorList>
    </citation>
    <scope>NUCLEOTIDE SEQUENCE [MRNA]</scope>
    <scope>INTERACTION WITH NUP214/CAN</scope>
    <source>
        <tissue>Placenta</tissue>
    </source>
</reference>
<reference key="2">
    <citation type="submission" date="2005-09" db="EMBL/GenBank/DDBJ databases">
        <authorList>
            <person name="Mural R.J."/>
            <person name="Istrail S."/>
            <person name="Sutton G.G."/>
            <person name="Florea L."/>
            <person name="Halpern A.L."/>
            <person name="Mobarry C.M."/>
            <person name="Lippert R."/>
            <person name="Walenz B."/>
            <person name="Shatkay H."/>
            <person name="Dew I."/>
            <person name="Miller J.R."/>
            <person name="Flanigan M.J."/>
            <person name="Edwards N.J."/>
            <person name="Bolanos R."/>
            <person name="Fasulo D."/>
            <person name="Halldorsson B.V."/>
            <person name="Hannenhalli S."/>
            <person name="Turner R."/>
            <person name="Yooseph S."/>
            <person name="Lu F."/>
            <person name="Nusskern D.R."/>
            <person name="Shue B.C."/>
            <person name="Zheng X.H."/>
            <person name="Zhong F."/>
            <person name="Delcher A.L."/>
            <person name="Huson D.H."/>
            <person name="Kravitz S.A."/>
            <person name="Mouchard L."/>
            <person name="Reinert K."/>
            <person name="Remington K.A."/>
            <person name="Clark A.G."/>
            <person name="Waterman M.S."/>
            <person name="Eichler E.E."/>
            <person name="Adams M.D."/>
            <person name="Hunkapiller M.W."/>
            <person name="Myers E.W."/>
            <person name="Venter J.C."/>
        </authorList>
    </citation>
    <scope>NUCLEOTIDE SEQUENCE [LARGE SCALE GENOMIC DNA]</scope>
</reference>
<reference key="3">
    <citation type="journal article" date="2004" name="Genome Res.">
        <title>The status, quality, and expansion of the NIH full-length cDNA project: the Mammalian Gene Collection (MGC).</title>
        <authorList>
            <consortium name="The MGC Project Team"/>
        </authorList>
    </citation>
    <scope>NUCLEOTIDE SEQUENCE [LARGE SCALE MRNA]</scope>
    <source>
        <tissue>Lung</tissue>
    </source>
</reference>
<reference key="4">
    <citation type="journal article" date="2006" name="Cell">
        <title>Global, in vivo, and site-specific phosphorylation dynamics in signaling networks.</title>
        <authorList>
            <person name="Olsen J.V."/>
            <person name="Blagoev B."/>
            <person name="Gnad F."/>
            <person name="Macek B."/>
            <person name="Kumar C."/>
            <person name="Mortensen P."/>
            <person name="Mann M."/>
        </authorList>
    </citation>
    <scope>PHOSPHORYLATION [LARGE SCALE ANALYSIS] AT SER-517</scope>
    <scope>IDENTIFICATION BY MASS SPECTROMETRY [LARGE SCALE ANALYSIS]</scope>
    <source>
        <tissue>Cervix carcinoma</tissue>
    </source>
</reference>
<reference key="5">
    <citation type="journal article" date="2006" name="Nat. Biotechnol.">
        <title>A probability-based approach for high-throughput protein phosphorylation analysis and site localization.</title>
        <authorList>
            <person name="Beausoleil S.A."/>
            <person name="Villen J."/>
            <person name="Gerber S.A."/>
            <person name="Rush J."/>
            <person name="Gygi S.P."/>
        </authorList>
    </citation>
    <scope>PHOSPHORYLATION [LARGE SCALE ANALYSIS] AT SER-517 AND THR-525</scope>
    <scope>IDENTIFICATION BY MASS SPECTROMETRY [LARGE SCALE ANALYSIS]</scope>
    <source>
        <tissue>Cervix carcinoma</tissue>
    </source>
</reference>
<reference key="6">
    <citation type="journal article" date="2008" name="Mol. Cell">
        <title>Kinase-selective enrichment enables quantitative phosphoproteomics of the kinome across the cell cycle.</title>
        <authorList>
            <person name="Daub H."/>
            <person name="Olsen J.V."/>
            <person name="Bairlein M."/>
            <person name="Gnad F."/>
            <person name="Oppermann F.S."/>
            <person name="Korner R."/>
            <person name="Greff Z."/>
            <person name="Keri G."/>
            <person name="Stemmann O."/>
            <person name="Mann M."/>
        </authorList>
    </citation>
    <scope>PHOSPHORYLATION [LARGE SCALE ANALYSIS] AT SER-517 AND THR-525</scope>
    <scope>IDENTIFICATION BY MASS SPECTROMETRY [LARGE SCALE ANALYSIS]</scope>
    <source>
        <tissue>Cervix carcinoma</tissue>
    </source>
</reference>
<reference key="7">
    <citation type="journal article" date="2008" name="Proc. Natl. Acad. Sci. U.S.A.">
        <title>A quantitative atlas of mitotic phosphorylation.</title>
        <authorList>
            <person name="Dephoure N."/>
            <person name="Zhou C."/>
            <person name="Villen J."/>
            <person name="Beausoleil S.A."/>
            <person name="Bakalarski C.E."/>
            <person name="Elledge S.J."/>
            <person name="Gygi S.P."/>
        </authorList>
    </citation>
    <scope>PHOSPHORYLATION [LARGE SCALE ANALYSIS] AT SER-35; SER-50; SER-517 AND THR-525</scope>
    <scope>IDENTIFICATION BY MASS SPECTROMETRY [LARGE SCALE ANALYSIS]</scope>
    <source>
        <tissue>Cervix carcinoma</tissue>
    </source>
</reference>
<reference key="8">
    <citation type="journal article" date="2009" name="Anal. Chem.">
        <title>Lys-N and trypsin cover complementary parts of the phosphoproteome in a refined SCX-based approach.</title>
        <authorList>
            <person name="Gauci S."/>
            <person name="Helbig A.O."/>
            <person name="Slijper M."/>
            <person name="Krijgsveld J."/>
            <person name="Heck A.J."/>
            <person name="Mohammed S."/>
        </authorList>
    </citation>
    <scope>IDENTIFICATION BY MASS SPECTROMETRY [LARGE SCALE ANALYSIS]</scope>
</reference>
<reference key="9">
    <citation type="journal article" date="2009" name="Sci. Signal.">
        <title>Quantitative phosphoproteomic analysis of T cell receptor signaling reveals system-wide modulation of protein-protein interactions.</title>
        <authorList>
            <person name="Mayya V."/>
            <person name="Lundgren D.H."/>
            <person name="Hwang S.-I."/>
            <person name="Rezaul K."/>
            <person name="Wu L."/>
            <person name="Eng J.K."/>
            <person name="Rodionov V."/>
            <person name="Han D.K."/>
        </authorList>
    </citation>
    <scope>PHOSPHORYLATION [LARGE SCALE ANALYSIS] AT SER-517</scope>
    <scope>IDENTIFICATION BY MASS SPECTROMETRY [LARGE SCALE ANALYSIS]</scope>
    <source>
        <tissue>Leukemic T-cell</tissue>
    </source>
</reference>
<reference key="10">
    <citation type="journal article" date="2010" name="Sci. Signal.">
        <title>Quantitative phosphoproteomics reveals widespread full phosphorylation site occupancy during mitosis.</title>
        <authorList>
            <person name="Olsen J.V."/>
            <person name="Vermeulen M."/>
            <person name="Santamaria A."/>
            <person name="Kumar C."/>
            <person name="Miller M.L."/>
            <person name="Jensen L.J."/>
            <person name="Gnad F."/>
            <person name="Cox J."/>
            <person name="Jensen T.S."/>
            <person name="Nigg E.A."/>
            <person name="Brunak S."/>
            <person name="Mann M."/>
        </authorList>
    </citation>
    <scope>PHOSPHORYLATION [LARGE SCALE ANALYSIS] AT SER-517; THR-525 AND SER-540</scope>
    <scope>IDENTIFICATION BY MASS SPECTROMETRY [LARGE SCALE ANALYSIS]</scope>
    <source>
        <tissue>Cervix carcinoma</tissue>
    </source>
</reference>
<reference key="11">
    <citation type="journal article" date="2011" name="BMC Syst. Biol.">
        <title>Initial characterization of the human central proteome.</title>
        <authorList>
            <person name="Burkard T.R."/>
            <person name="Planyavsky M."/>
            <person name="Kaupe I."/>
            <person name="Breitwieser F.P."/>
            <person name="Buerckstuemmer T."/>
            <person name="Bennett K.L."/>
            <person name="Superti-Furga G."/>
            <person name="Colinge J."/>
        </authorList>
    </citation>
    <scope>IDENTIFICATION BY MASS SPECTROMETRY [LARGE SCALE ANALYSIS]</scope>
</reference>
<reference key="12">
    <citation type="journal article" date="2011" name="Sci. Signal.">
        <title>System-wide temporal characterization of the proteome and phosphoproteome of human embryonic stem cell differentiation.</title>
        <authorList>
            <person name="Rigbolt K.T."/>
            <person name="Prokhorova T.A."/>
            <person name="Akimov V."/>
            <person name="Henningsen J."/>
            <person name="Johansen P.T."/>
            <person name="Kratchmarova I."/>
            <person name="Kassem M."/>
            <person name="Mann M."/>
            <person name="Olsen J.V."/>
            <person name="Blagoev B."/>
        </authorList>
    </citation>
    <scope>PHOSPHORYLATION [LARGE SCALE ANALYSIS] AT SER-517</scope>
    <scope>IDENTIFICATION BY MASS SPECTROMETRY [LARGE SCALE ANALYSIS]</scope>
</reference>
<reference key="13">
    <citation type="journal article" date="2012" name="Mol. Cell. Proteomics">
        <title>Comparative large-scale characterisation of plant vs. mammal proteins reveals similar and idiosyncratic N-alpha acetylation features.</title>
        <authorList>
            <person name="Bienvenut W.V."/>
            <person name="Sumpton D."/>
            <person name="Martinez A."/>
            <person name="Lilla S."/>
            <person name="Espagne C."/>
            <person name="Meinnel T."/>
            <person name="Giglione C."/>
        </authorList>
    </citation>
    <scope>ACETYLATION [LARGE SCALE ANALYSIS] AT ALA-2</scope>
    <scope>CLEAVAGE OF INITIATOR METHIONINE [LARGE SCALE ANALYSIS]</scope>
    <scope>IDENTIFICATION BY MASS SPECTROMETRY [LARGE SCALE ANALYSIS]</scope>
</reference>
<reference key="14">
    <citation type="journal article" date="2013" name="J. Proteome Res.">
        <title>Toward a comprehensive characterization of a human cancer cell phosphoproteome.</title>
        <authorList>
            <person name="Zhou H."/>
            <person name="Di Palma S."/>
            <person name="Preisinger C."/>
            <person name="Peng M."/>
            <person name="Polat A.N."/>
            <person name="Heck A.J."/>
            <person name="Mohammed S."/>
        </authorList>
    </citation>
    <scope>PHOSPHORYLATION [LARGE SCALE ANALYSIS] AT SER-35; SER-50; SER-379; SER-437; SER-442; SER-517 AND THR-525</scope>
    <scope>IDENTIFICATION BY MASS SPECTROMETRY [LARGE SCALE ANALYSIS]</scope>
    <source>
        <tissue>Cervix carcinoma</tissue>
        <tissue>Erythroleukemia</tissue>
    </source>
</reference>
<reference key="15">
    <citation type="journal article" date="2014" name="J. Proteomics">
        <title>An enzyme assisted RP-RPLC approach for in-depth analysis of human liver phosphoproteome.</title>
        <authorList>
            <person name="Bian Y."/>
            <person name="Song C."/>
            <person name="Cheng K."/>
            <person name="Dong M."/>
            <person name="Wang F."/>
            <person name="Huang J."/>
            <person name="Sun D."/>
            <person name="Wang L."/>
            <person name="Ye M."/>
            <person name="Zou H."/>
        </authorList>
    </citation>
    <scope>IDENTIFICATION BY MASS SPECTROMETRY [LARGE SCALE ANALYSIS]</scope>
    <source>
        <tissue>Liver</tissue>
    </source>
</reference>
<reference key="16">
    <citation type="journal article" date="2018" name="PLoS Genet.">
        <title>Biallelic mutations in nucleoporin NUP88 cause lethal fetal akinesia deformation sequence.</title>
        <authorList>
            <person name="Bonnin E."/>
            <person name="Cabochette P."/>
            <person name="Filosa A."/>
            <person name="Juehlen R."/>
            <person name="Komatsuzaki S."/>
            <person name="Hezwani M."/>
            <person name="Dickmanns A."/>
            <person name="Martinelli V."/>
            <person name="Vermeersch M."/>
            <person name="Supply L."/>
            <person name="Martins N."/>
            <person name="Pirenne L."/>
            <person name="Ravenscroft G."/>
            <person name="Lombard M."/>
            <person name="Port S."/>
            <person name="Spillner C."/>
            <person name="Janssens S."/>
            <person name="Roets E."/>
            <person name="Van Dorpe J."/>
            <person name="Lammens M."/>
            <person name="Kehlenbach R.H."/>
            <person name="Ficner R."/>
            <person name="Laing N.G."/>
            <person name="Hoffmann K."/>
            <person name="Vanhollebeke B."/>
            <person name="Fahrenkrog B."/>
        </authorList>
    </citation>
    <scope>FUNCTION</scope>
    <scope>SUBCELLULAR LOCATION</scope>
    <scope>INTERACTION WITH NUP62; NUP98 AND NUP214</scope>
    <scope>INVOLVEMENT IN FADS4</scope>
    <scope>VARIANTS FADS4 TYR-434; 509-ARG--PHE-741 DEL AND GLU-634 DEL</scope>
    <scope>CHARACTERIZATION OF VARIANTS FADS4 TYR-434; 509-ARG--PHE-741 DEL AND GLU-634 DEL</scope>
</reference>